<reference key="1">
    <citation type="journal article" date="1996" name="Microbiology">
        <title>The 25 degrees-36 degrees region of the Bacillus subtilis chromosome: determination of the sequence of a 146 kb segment and identification of 113 genes.</title>
        <authorList>
            <person name="Yamane K."/>
            <person name="Kumano M."/>
            <person name="Kurita K."/>
        </authorList>
    </citation>
    <scope>NUCLEOTIDE SEQUENCE [GENOMIC DNA]</scope>
    <source>
        <strain>168</strain>
    </source>
</reference>
<reference key="2">
    <citation type="journal article" date="1997" name="Nature">
        <title>The complete genome sequence of the Gram-positive bacterium Bacillus subtilis.</title>
        <authorList>
            <person name="Kunst F."/>
            <person name="Ogasawara N."/>
            <person name="Moszer I."/>
            <person name="Albertini A.M."/>
            <person name="Alloni G."/>
            <person name="Azevedo V."/>
            <person name="Bertero M.G."/>
            <person name="Bessieres P."/>
            <person name="Bolotin A."/>
            <person name="Borchert S."/>
            <person name="Borriss R."/>
            <person name="Boursier L."/>
            <person name="Brans A."/>
            <person name="Braun M."/>
            <person name="Brignell S.C."/>
            <person name="Bron S."/>
            <person name="Brouillet S."/>
            <person name="Bruschi C.V."/>
            <person name="Caldwell B."/>
            <person name="Capuano V."/>
            <person name="Carter N.M."/>
            <person name="Choi S.-K."/>
            <person name="Codani J.-J."/>
            <person name="Connerton I.F."/>
            <person name="Cummings N.J."/>
            <person name="Daniel R.A."/>
            <person name="Denizot F."/>
            <person name="Devine K.M."/>
            <person name="Duesterhoeft A."/>
            <person name="Ehrlich S.D."/>
            <person name="Emmerson P.T."/>
            <person name="Entian K.-D."/>
            <person name="Errington J."/>
            <person name="Fabret C."/>
            <person name="Ferrari E."/>
            <person name="Foulger D."/>
            <person name="Fritz C."/>
            <person name="Fujita M."/>
            <person name="Fujita Y."/>
            <person name="Fuma S."/>
            <person name="Galizzi A."/>
            <person name="Galleron N."/>
            <person name="Ghim S.-Y."/>
            <person name="Glaser P."/>
            <person name="Goffeau A."/>
            <person name="Golightly E.J."/>
            <person name="Grandi G."/>
            <person name="Guiseppi G."/>
            <person name="Guy B.J."/>
            <person name="Haga K."/>
            <person name="Haiech J."/>
            <person name="Harwood C.R."/>
            <person name="Henaut A."/>
            <person name="Hilbert H."/>
            <person name="Holsappel S."/>
            <person name="Hosono S."/>
            <person name="Hullo M.-F."/>
            <person name="Itaya M."/>
            <person name="Jones L.-M."/>
            <person name="Joris B."/>
            <person name="Karamata D."/>
            <person name="Kasahara Y."/>
            <person name="Klaerr-Blanchard M."/>
            <person name="Klein C."/>
            <person name="Kobayashi Y."/>
            <person name="Koetter P."/>
            <person name="Koningstein G."/>
            <person name="Krogh S."/>
            <person name="Kumano M."/>
            <person name="Kurita K."/>
            <person name="Lapidus A."/>
            <person name="Lardinois S."/>
            <person name="Lauber J."/>
            <person name="Lazarevic V."/>
            <person name="Lee S.-M."/>
            <person name="Levine A."/>
            <person name="Liu H."/>
            <person name="Masuda S."/>
            <person name="Mauel C."/>
            <person name="Medigue C."/>
            <person name="Medina N."/>
            <person name="Mellado R.P."/>
            <person name="Mizuno M."/>
            <person name="Moestl D."/>
            <person name="Nakai S."/>
            <person name="Noback M."/>
            <person name="Noone D."/>
            <person name="O'Reilly M."/>
            <person name="Ogawa K."/>
            <person name="Ogiwara A."/>
            <person name="Oudega B."/>
            <person name="Park S.-H."/>
            <person name="Parro V."/>
            <person name="Pohl T.M."/>
            <person name="Portetelle D."/>
            <person name="Porwollik S."/>
            <person name="Prescott A.M."/>
            <person name="Presecan E."/>
            <person name="Pujic P."/>
            <person name="Purnelle B."/>
            <person name="Rapoport G."/>
            <person name="Rey M."/>
            <person name="Reynolds S."/>
            <person name="Rieger M."/>
            <person name="Rivolta C."/>
            <person name="Rocha E."/>
            <person name="Roche B."/>
            <person name="Rose M."/>
            <person name="Sadaie Y."/>
            <person name="Sato T."/>
            <person name="Scanlan E."/>
            <person name="Schleich S."/>
            <person name="Schroeter R."/>
            <person name="Scoffone F."/>
            <person name="Sekiguchi J."/>
            <person name="Sekowska A."/>
            <person name="Seror S.J."/>
            <person name="Serror P."/>
            <person name="Shin B.-S."/>
            <person name="Soldo B."/>
            <person name="Sorokin A."/>
            <person name="Tacconi E."/>
            <person name="Takagi T."/>
            <person name="Takahashi H."/>
            <person name="Takemaru K."/>
            <person name="Takeuchi M."/>
            <person name="Tamakoshi A."/>
            <person name="Tanaka T."/>
            <person name="Terpstra P."/>
            <person name="Tognoni A."/>
            <person name="Tosato V."/>
            <person name="Uchiyama S."/>
            <person name="Vandenbol M."/>
            <person name="Vannier F."/>
            <person name="Vassarotti A."/>
            <person name="Viari A."/>
            <person name="Wambutt R."/>
            <person name="Wedler E."/>
            <person name="Wedler H."/>
            <person name="Weitzenegger T."/>
            <person name="Winters P."/>
            <person name="Wipat A."/>
            <person name="Yamamoto H."/>
            <person name="Yamane K."/>
            <person name="Yasumoto K."/>
            <person name="Yata K."/>
            <person name="Yoshida K."/>
            <person name="Yoshikawa H.-F."/>
            <person name="Zumstein E."/>
            <person name="Yoshikawa H."/>
            <person name="Danchin A."/>
        </authorList>
    </citation>
    <scope>NUCLEOTIDE SEQUENCE [LARGE SCALE GENOMIC DNA]</scope>
    <source>
        <strain>168</strain>
    </source>
</reference>
<reference key="3">
    <citation type="journal article" date="2007" name="Mol. Cell. Proteomics">
        <title>The serine/threonine/tyrosine phosphoproteome of the model bacterium Bacillus subtilis.</title>
        <authorList>
            <person name="Macek B."/>
            <person name="Mijakovic I."/>
            <person name="Olsen J.V."/>
            <person name="Gnad F."/>
            <person name="Kumar C."/>
            <person name="Jensen P.R."/>
            <person name="Mann M."/>
        </authorList>
    </citation>
    <scope>PHOSPHORYLATION [LARGE SCALE ANALYSIS] AT SER-24</scope>
    <scope>IDENTIFICATION BY MASS SPECTROMETRY</scope>
    <source>
        <strain>168</strain>
    </source>
</reference>
<reference key="4">
    <citation type="journal article" date="2007" name="Proteomics">
        <title>Transcriptome and proteome analyses in response to 2-methylhydroquinone and 6-brom-2-vinyl-chroman-4-on reveal different degradation systems involved in the catabolism of aromatic compounds in Bacillus subtilis.</title>
        <authorList>
            <person name="Nguyen V.D."/>
            <person name="Wolf C."/>
            <person name="Maeder U."/>
            <person name="Lalk M."/>
            <person name="Langer P."/>
            <person name="Lindequist U."/>
            <person name="Hecker M."/>
            <person name="Antelmann H."/>
        </authorList>
    </citation>
    <scope>POTENTIAL FUNCTION</scope>
    <scope>INDUCTION</scope>
    <source>
        <strain>168</strain>
    </source>
</reference>
<comment type="function">
    <text evidence="3">Putative monooxygenase that may contribute to the degradation of aromatic compounds.</text>
</comment>
<comment type="induction">
    <text evidence="2">Strongly induced by stress due to exposure to 6-brom-2-vinyl-chroman-4-on (chromanon) and less strongly induced after exposure to 2-methylhydroquinone (2-MHQ) or catechol stress.</text>
</comment>
<comment type="similarity">
    <text evidence="3">Belongs to the LsrG family.</text>
</comment>
<dbReference type="EC" id="1.-.-.-"/>
<dbReference type="EMBL" id="D50453">
    <property type="protein sequence ID" value="BAA09019.1"/>
    <property type="molecule type" value="Genomic_DNA"/>
</dbReference>
<dbReference type="EMBL" id="AL009126">
    <property type="protein sequence ID" value="CAB12195.1"/>
    <property type="molecule type" value="Genomic_DNA"/>
</dbReference>
<dbReference type="PIR" id="A69764">
    <property type="entry name" value="A69764"/>
</dbReference>
<dbReference type="RefSeq" id="NP_388269.1">
    <property type="nucleotide sequence ID" value="NC_000964.3"/>
</dbReference>
<dbReference type="RefSeq" id="WP_003234477.1">
    <property type="nucleotide sequence ID" value="NZ_OZ025638.1"/>
</dbReference>
<dbReference type="SMR" id="P94425"/>
<dbReference type="FunCoup" id="P94425">
    <property type="interactions" value="30"/>
</dbReference>
<dbReference type="STRING" id="224308.BSU03870"/>
<dbReference type="iPTMnet" id="P94425"/>
<dbReference type="jPOST" id="P94425"/>
<dbReference type="PaxDb" id="224308-BSU03870"/>
<dbReference type="EnsemblBacteria" id="CAB12195">
    <property type="protein sequence ID" value="CAB12195"/>
    <property type="gene ID" value="BSU_03870"/>
</dbReference>
<dbReference type="GeneID" id="938274"/>
<dbReference type="KEGG" id="bsu:BSU03870"/>
<dbReference type="PATRIC" id="fig|224308.179.peg.410"/>
<dbReference type="eggNOG" id="COG1359">
    <property type="taxonomic scope" value="Bacteria"/>
</dbReference>
<dbReference type="InParanoid" id="P94425"/>
<dbReference type="OrthoDB" id="287932at2"/>
<dbReference type="PhylomeDB" id="P94425"/>
<dbReference type="BioCyc" id="BSUB:BSU03870-MONOMER"/>
<dbReference type="Proteomes" id="UP000001570">
    <property type="component" value="Chromosome"/>
</dbReference>
<dbReference type="GO" id="GO:0003824">
    <property type="term" value="F:catalytic activity"/>
    <property type="evidence" value="ECO:0000318"/>
    <property type="project" value="GO_Central"/>
</dbReference>
<dbReference type="GO" id="GO:0004497">
    <property type="term" value="F:monooxygenase activity"/>
    <property type="evidence" value="ECO:0007669"/>
    <property type="project" value="UniProtKB-KW"/>
</dbReference>
<dbReference type="GO" id="GO:0009056">
    <property type="term" value="P:catabolic process"/>
    <property type="evidence" value="ECO:0007669"/>
    <property type="project" value="UniProtKB-KW"/>
</dbReference>
<dbReference type="GO" id="GO:0009636">
    <property type="term" value="P:response to toxic substance"/>
    <property type="evidence" value="ECO:0007669"/>
    <property type="project" value="UniProtKB-KW"/>
</dbReference>
<dbReference type="Gene3D" id="3.30.70.100">
    <property type="match status" value="1"/>
</dbReference>
<dbReference type="InterPro" id="IPR007138">
    <property type="entry name" value="ABM_dom"/>
</dbReference>
<dbReference type="InterPro" id="IPR050744">
    <property type="entry name" value="AI-2_Isomerase_LsrG"/>
</dbReference>
<dbReference type="InterPro" id="IPR011008">
    <property type="entry name" value="Dimeric_a/b-barrel"/>
</dbReference>
<dbReference type="PANTHER" id="PTHR33336:SF3">
    <property type="entry name" value="ABM DOMAIN-CONTAINING PROTEIN"/>
    <property type="match status" value="1"/>
</dbReference>
<dbReference type="PANTHER" id="PTHR33336">
    <property type="entry name" value="QUINOL MONOOXYGENASE YGIN-RELATED"/>
    <property type="match status" value="1"/>
</dbReference>
<dbReference type="Pfam" id="PF03992">
    <property type="entry name" value="ABM"/>
    <property type="match status" value="1"/>
</dbReference>
<dbReference type="SUPFAM" id="SSF54909">
    <property type="entry name" value="Dimeric alpha+beta barrel"/>
    <property type="match status" value="1"/>
</dbReference>
<dbReference type="PROSITE" id="PS51725">
    <property type="entry name" value="ABM"/>
    <property type="match status" value="1"/>
</dbReference>
<feature type="chain" id="PRO_0000049479" description="Putative monooxygenase YcnE">
    <location>
        <begin position="1"/>
        <end position="95"/>
    </location>
</feature>
<feature type="domain" description="ABM">
    <location>
        <begin position="2"/>
        <end position="93"/>
    </location>
</feature>
<feature type="modified residue" description="Phosphoserine" evidence="1">
    <location>
        <position position="24"/>
    </location>
</feature>
<protein>
    <recommendedName>
        <fullName>Putative monooxygenase YcnE</fullName>
        <ecNumber>1.-.-.-</ecNumber>
    </recommendedName>
</protein>
<sequence>MIVLQAYIKVKPEKREEFLSEAQSLVQHSRAEEGNAQYDLFEKVGEENTFVMLEKWKDEAAMKFHNETAHFQGFVAKGKELLSAPLDVVRTELSE</sequence>
<keyword id="KW-0058">Aromatic hydrocarbons catabolism</keyword>
<keyword id="KW-0216">Detoxification</keyword>
<keyword id="KW-0503">Monooxygenase</keyword>
<keyword id="KW-0560">Oxidoreductase</keyword>
<keyword id="KW-0597">Phosphoprotein</keyword>
<keyword id="KW-1185">Reference proteome</keyword>
<gene>
    <name type="primary">ycnE</name>
    <name type="ordered locus">BSU03870</name>
</gene>
<name>YCNE_BACSU</name>
<accession>P94425</accession>
<organism>
    <name type="scientific">Bacillus subtilis (strain 168)</name>
    <dbReference type="NCBI Taxonomy" id="224308"/>
    <lineage>
        <taxon>Bacteria</taxon>
        <taxon>Bacillati</taxon>
        <taxon>Bacillota</taxon>
        <taxon>Bacilli</taxon>
        <taxon>Bacillales</taxon>
        <taxon>Bacillaceae</taxon>
        <taxon>Bacillus</taxon>
    </lineage>
</organism>
<evidence type="ECO:0000269" key="1">
    <source>
    </source>
</evidence>
<evidence type="ECO:0000269" key="2">
    <source>
    </source>
</evidence>
<evidence type="ECO:0000305" key="3"/>
<proteinExistence type="evidence at protein level"/>